<reference key="1">
    <citation type="journal article" date="1989" name="FEBS Lett.">
        <title>Primary structures of new 'iso-hirudins'.</title>
        <authorList>
            <person name="Scharf M."/>
            <person name="Engels J."/>
            <person name="Tripier D."/>
        </authorList>
    </citation>
    <scope>PROTEIN SEQUENCE</scope>
</reference>
<sequence>VVYTDCTESGQNLCLCEDSNVCGQGNKCILGSNGEKNQCVTGEGTPKPQSHNDGDFEEIPEEYLQ</sequence>
<feature type="chain" id="PRO_0000195649" description="Hirudin-3">
    <location>
        <begin position="1"/>
        <end position="65"/>
    </location>
</feature>
<feature type="region of interest" description="Interaction with thrombin active site" evidence="1">
    <location>
        <begin position="1"/>
        <end position="3"/>
    </location>
</feature>
<feature type="region of interest" description="Disordered" evidence="2">
    <location>
        <begin position="39"/>
        <end position="65"/>
    </location>
</feature>
<feature type="region of interest" description="Interaction with fibrinogen-binding exosite of thrombin" evidence="1">
    <location>
        <begin position="55"/>
        <end position="65"/>
    </location>
</feature>
<feature type="compositionally biased region" description="Acidic residues" evidence="2">
    <location>
        <begin position="55"/>
        <end position="65"/>
    </location>
</feature>
<feature type="modified residue" description="Sulfotyrosine" evidence="1">
    <location>
        <position position="63"/>
    </location>
</feature>
<feature type="glycosylation site" description="O-linked (GalNAc...) threonine" evidence="1">
    <location>
        <position position="45"/>
    </location>
</feature>
<feature type="disulfide bond" evidence="1">
    <location>
        <begin position="6"/>
        <end position="14"/>
    </location>
</feature>
<feature type="disulfide bond" evidence="1">
    <location>
        <begin position="16"/>
        <end position="28"/>
    </location>
</feature>
<feature type="disulfide bond" evidence="1">
    <location>
        <begin position="22"/>
        <end position="39"/>
    </location>
</feature>
<keyword id="KW-0002">3D-structure</keyword>
<keyword id="KW-0903">Direct protein sequencing</keyword>
<keyword id="KW-1015">Disulfide bond</keyword>
<keyword id="KW-0325">Glycoprotein</keyword>
<keyword id="KW-0646">Protease inhibitor</keyword>
<keyword id="KW-0964">Secreted</keyword>
<keyword id="KW-0722">Serine protease inhibitor</keyword>
<keyword id="KW-0765">Sulfation</keyword>
<accession>P28509</accession>
<evidence type="ECO:0000250" key="1"/>
<evidence type="ECO:0000256" key="2">
    <source>
        <dbReference type="SAM" id="MobiDB-lite"/>
    </source>
</evidence>
<evidence type="ECO:0000305" key="3"/>
<proteinExistence type="evidence at protein level"/>
<organism>
    <name type="scientific">Hirudo medicinalis</name>
    <name type="common">Medicinal leech</name>
    <dbReference type="NCBI Taxonomy" id="6421"/>
    <lineage>
        <taxon>Eukaryota</taxon>
        <taxon>Metazoa</taxon>
        <taxon>Spiralia</taxon>
        <taxon>Lophotrochozoa</taxon>
        <taxon>Annelida</taxon>
        <taxon>Clitellata</taxon>
        <taxon>Hirudinea</taxon>
        <taxon>Hirudinida</taxon>
        <taxon>Hirudiniformes</taxon>
        <taxon>Hirudinidae</taxon>
        <taxon>Hirudo</taxon>
    </lineage>
</organism>
<name>HIR3_HIRME</name>
<protein>
    <recommendedName>
        <fullName>Hirudin-3</fullName>
    </recommendedName>
    <alternativeName>
        <fullName>Hirudin III</fullName>
    </alternativeName>
</protein>
<comment type="function">
    <text>Hirudin is a potent thrombin-specific protease inhibitor. It forms a stable non-covalent complex with alpha-thrombin, thereby abolishing its ability to cleave fibrinogen.</text>
</comment>
<comment type="subcellular location">
    <subcellularLocation>
        <location>Secreted</location>
    </subcellularLocation>
</comment>
<comment type="similarity">
    <text evidence="3">Belongs to the protease inhibitor I14 (hirudin) family.</text>
</comment>
<dbReference type="PIR" id="S05676">
    <property type="entry name" value="S05676"/>
</dbReference>
<dbReference type="PDB" id="1HDT">
    <property type="method" value="X-ray"/>
    <property type="resolution" value="2.60 A"/>
    <property type="chains" value="P=54-65"/>
</dbReference>
<dbReference type="PDBsum" id="1HDT"/>
<dbReference type="BMRB" id="P28509"/>
<dbReference type="SMR" id="P28509"/>
<dbReference type="Allergome" id="9843">
    <property type="allergen name" value="Hir me Hirudin"/>
</dbReference>
<dbReference type="EvolutionaryTrace" id="P28509"/>
<dbReference type="GO" id="GO:0005576">
    <property type="term" value="C:extracellular region"/>
    <property type="evidence" value="ECO:0007669"/>
    <property type="project" value="UniProtKB-SubCell"/>
</dbReference>
<dbReference type="GO" id="GO:0004867">
    <property type="term" value="F:serine-type endopeptidase inhibitor activity"/>
    <property type="evidence" value="ECO:0007669"/>
    <property type="project" value="UniProtKB-KW"/>
</dbReference>
<dbReference type="FunFam" id="2.70.10.10:FF:000001">
    <property type="entry name" value="Hirudin variant-1"/>
    <property type="match status" value="1"/>
</dbReference>
<dbReference type="Gene3D" id="2.70.10.10">
    <property type="entry name" value="Thrombin Inhibitor (Hirudin), subunit I"/>
    <property type="match status" value="1"/>
</dbReference>
<dbReference type="InterPro" id="IPR024793">
    <property type="entry name" value="Hirudin"/>
</dbReference>
<dbReference type="InterPro" id="IPR011061">
    <property type="entry name" value="Hirudin/antistatin"/>
</dbReference>
<dbReference type="InterPro" id="IPR000429">
    <property type="entry name" value="Prot_inh_hirudin"/>
</dbReference>
<dbReference type="Pfam" id="PF00713">
    <property type="entry name" value="Hirudin"/>
    <property type="match status" value="1"/>
</dbReference>
<dbReference type="PIRSF" id="PIRSF001640">
    <property type="entry name" value="Hirudin"/>
    <property type="match status" value="1"/>
</dbReference>
<dbReference type="PRINTS" id="PR00777">
    <property type="entry name" value="HIRUDIN"/>
</dbReference>
<dbReference type="SUPFAM" id="SSF57262">
    <property type="entry name" value="Leech antihemostatic proteins"/>
    <property type="match status" value="1"/>
</dbReference>